<reference key="1">
    <citation type="submission" date="2006-02" db="EMBL/GenBank/DDBJ databases">
        <title>Complete sequence of chromosome of Rhodoferax ferrireducens DSM 15236.</title>
        <authorList>
            <person name="Copeland A."/>
            <person name="Lucas S."/>
            <person name="Lapidus A."/>
            <person name="Barry K."/>
            <person name="Detter J.C."/>
            <person name="Glavina del Rio T."/>
            <person name="Hammon N."/>
            <person name="Israni S."/>
            <person name="Pitluck S."/>
            <person name="Brettin T."/>
            <person name="Bruce D."/>
            <person name="Han C."/>
            <person name="Tapia R."/>
            <person name="Gilna P."/>
            <person name="Kiss H."/>
            <person name="Schmutz J."/>
            <person name="Larimer F."/>
            <person name="Land M."/>
            <person name="Kyrpides N."/>
            <person name="Ivanova N."/>
            <person name="Richardson P."/>
        </authorList>
    </citation>
    <scope>NUCLEOTIDE SEQUENCE [LARGE SCALE GENOMIC DNA]</scope>
    <source>
        <strain>ATCC BAA-621 / DSM 15236 / T118</strain>
    </source>
</reference>
<evidence type="ECO:0000255" key="1">
    <source>
        <dbReference type="HAMAP-Rule" id="MF_01215"/>
    </source>
</evidence>
<feature type="chain" id="PRO_1000066486" description="Orotidine 5'-phosphate decarboxylase">
    <location>
        <begin position="1"/>
        <end position="287"/>
    </location>
</feature>
<feature type="active site" description="Proton donor" evidence="1">
    <location>
        <position position="95"/>
    </location>
</feature>
<comment type="catalytic activity">
    <reaction evidence="1">
        <text>orotidine 5'-phosphate + H(+) = UMP + CO2</text>
        <dbReference type="Rhea" id="RHEA:11596"/>
        <dbReference type="ChEBI" id="CHEBI:15378"/>
        <dbReference type="ChEBI" id="CHEBI:16526"/>
        <dbReference type="ChEBI" id="CHEBI:57538"/>
        <dbReference type="ChEBI" id="CHEBI:57865"/>
        <dbReference type="EC" id="4.1.1.23"/>
    </reaction>
</comment>
<comment type="pathway">
    <text evidence="1">Pyrimidine metabolism; UMP biosynthesis via de novo pathway; UMP from orotate: step 2/2.</text>
</comment>
<comment type="similarity">
    <text evidence="1">Belongs to the OMP decarboxylase family. Type 2 subfamily.</text>
</comment>
<organism>
    <name type="scientific">Albidiferax ferrireducens (strain ATCC BAA-621 / DSM 15236 / T118)</name>
    <name type="common">Rhodoferax ferrireducens</name>
    <dbReference type="NCBI Taxonomy" id="338969"/>
    <lineage>
        <taxon>Bacteria</taxon>
        <taxon>Pseudomonadati</taxon>
        <taxon>Pseudomonadota</taxon>
        <taxon>Betaproteobacteria</taxon>
        <taxon>Burkholderiales</taxon>
        <taxon>Comamonadaceae</taxon>
        <taxon>Rhodoferax</taxon>
    </lineage>
</organism>
<protein>
    <recommendedName>
        <fullName evidence="1">Orotidine 5'-phosphate decarboxylase</fullName>
        <ecNumber evidence="1">4.1.1.23</ecNumber>
    </recommendedName>
    <alternativeName>
        <fullName evidence="1">OMP decarboxylase</fullName>
        <shortName evidence="1">OMPDCase</shortName>
        <shortName evidence="1">OMPdecase</shortName>
    </alternativeName>
</protein>
<keyword id="KW-0210">Decarboxylase</keyword>
<keyword id="KW-0456">Lyase</keyword>
<keyword id="KW-0665">Pyrimidine biosynthesis</keyword>
<keyword id="KW-1185">Reference proteome</keyword>
<sequence>MTFLDMLRAAERQNGSMLCVGLDPEPTRFPAHYSGDVSKIYDFCAAIVDATADLVMAFKPQIAYFAAHRAEPQLERLIAHMRRAAPHVPVILDAKRGDIGSTAEQYAKEAFERYGADAVTLSPFMGFDSLQPYLRYHGKGAFLLCRTSNPGGDDLQSQRLASVEGTPLLYEHIARLAQGPWNLNGQLGLVVGATYPAELERVRALAPTLPLLIPGVGAQGGDCAATVRAAWRAAPGTSGEALDTLAPIIVNSSRAILYASSGADFAQAARREALATRDLLQAARQPA</sequence>
<proteinExistence type="inferred from homology"/>
<gene>
    <name evidence="1" type="primary">pyrF</name>
    <name type="ordered locus">Rfer_3776</name>
</gene>
<name>PYRF_ALBFT</name>
<accession>Q21RX7</accession>
<dbReference type="EC" id="4.1.1.23" evidence="1"/>
<dbReference type="EMBL" id="CP000267">
    <property type="protein sequence ID" value="ABD71476.1"/>
    <property type="molecule type" value="Genomic_DNA"/>
</dbReference>
<dbReference type="RefSeq" id="WP_011466039.1">
    <property type="nucleotide sequence ID" value="NC_007908.1"/>
</dbReference>
<dbReference type="SMR" id="Q21RX7"/>
<dbReference type="STRING" id="338969.Rfer_3776"/>
<dbReference type="KEGG" id="rfr:Rfer_3776"/>
<dbReference type="eggNOG" id="COG0284">
    <property type="taxonomic scope" value="Bacteria"/>
</dbReference>
<dbReference type="HOGENOM" id="CLU_060704_1_0_4"/>
<dbReference type="UniPathway" id="UPA00070">
    <property type="reaction ID" value="UER00120"/>
</dbReference>
<dbReference type="Proteomes" id="UP000008332">
    <property type="component" value="Chromosome"/>
</dbReference>
<dbReference type="GO" id="GO:0004590">
    <property type="term" value="F:orotidine-5'-phosphate decarboxylase activity"/>
    <property type="evidence" value="ECO:0007669"/>
    <property type="project" value="UniProtKB-UniRule"/>
</dbReference>
<dbReference type="GO" id="GO:0006207">
    <property type="term" value="P:'de novo' pyrimidine nucleobase biosynthetic process"/>
    <property type="evidence" value="ECO:0007669"/>
    <property type="project" value="InterPro"/>
</dbReference>
<dbReference type="GO" id="GO:0044205">
    <property type="term" value="P:'de novo' UMP biosynthetic process"/>
    <property type="evidence" value="ECO:0007669"/>
    <property type="project" value="UniProtKB-UniRule"/>
</dbReference>
<dbReference type="CDD" id="cd04725">
    <property type="entry name" value="OMP_decarboxylase_like"/>
    <property type="match status" value="1"/>
</dbReference>
<dbReference type="Gene3D" id="3.20.20.70">
    <property type="entry name" value="Aldolase class I"/>
    <property type="match status" value="1"/>
</dbReference>
<dbReference type="HAMAP" id="MF_01215">
    <property type="entry name" value="OMPdecase_type2"/>
    <property type="match status" value="1"/>
</dbReference>
<dbReference type="InterPro" id="IPR013785">
    <property type="entry name" value="Aldolase_TIM"/>
</dbReference>
<dbReference type="InterPro" id="IPR018089">
    <property type="entry name" value="OMPdecase_AS"/>
</dbReference>
<dbReference type="InterPro" id="IPR011995">
    <property type="entry name" value="OMPdecase_type-2"/>
</dbReference>
<dbReference type="InterPro" id="IPR001754">
    <property type="entry name" value="OMPdeCOase_dom"/>
</dbReference>
<dbReference type="InterPro" id="IPR011060">
    <property type="entry name" value="RibuloseP-bd_barrel"/>
</dbReference>
<dbReference type="NCBIfam" id="TIGR02127">
    <property type="entry name" value="pyrF_sub2"/>
    <property type="match status" value="1"/>
</dbReference>
<dbReference type="PANTHER" id="PTHR43375">
    <property type="entry name" value="OROTIDINE 5'-PHOSPHATE DECARBOXYLASE"/>
    <property type="match status" value="1"/>
</dbReference>
<dbReference type="PANTHER" id="PTHR43375:SF1">
    <property type="entry name" value="OROTIDINE 5'-PHOSPHATE DECARBOXYLASE"/>
    <property type="match status" value="1"/>
</dbReference>
<dbReference type="Pfam" id="PF00215">
    <property type="entry name" value="OMPdecase"/>
    <property type="match status" value="1"/>
</dbReference>
<dbReference type="SMART" id="SM00934">
    <property type="entry name" value="OMPdecase"/>
    <property type="match status" value="1"/>
</dbReference>
<dbReference type="SUPFAM" id="SSF51366">
    <property type="entry name" value="Ribulose-phoshate binding barrel"/>
    <property type="match status" value="1"/>
</dbReference>
<dbReference type="PROSITE" id="PS00156">
    <property type="entry name" value="OMPDECASE"/>
    <property type="match status" value="1"/>
</dbReference>